<keyword id="KW-0215">Deoxyribonucleotide synthesis</keyword>
<keyword id="KW-0408">Iron</keyword>
<keyword id="KW-0479">Metal-binding</keyword>
<keyword id="KW-0560">Oxidoreductase</keyword>
<sequence>MPPKSHKCSRKEGEVEEPLLTENPDRYVIFPIKYPDIWQKYKEAESSIWTVEEIDLGNDMTDWEKLDDGERHFIKHVLAFFAASDGIVLENLAERFMCEVQVPEVRCFYGFQIAMENIHSETYSVLIDTYVVDPDEKQRLLHAIRTIPCIEKKAKWAIEWIGSQTSFPTRLVAFAAVEGIFFSGSFCAIFWLKKRGLMPGLTFSNELISRDEGLHTDFACLLYEKYIVNKLPRDRVLEIICNAVSIEREFICDALPVRLIGMNSQLMTQYIEFVADRLLVSLGYDRHYNSKNPFDFMDMISLQGKTNFFEKKVGEYQKAGVMSSERSSKVFSLDADF</sequence>
<name>RIR2_TRYBB</name>
<evidence type="ECO:0000250" key="1"/>
<evidence type="ECO:0000255" key="2">
    <source>
        <dbReference type="PROSITE-ProRule" id="PRU10014"/>
    </source>
</evidence>
<evidence type="ECO:0000305" key="3"/>
<gene>
    <name type="primary">RNR2</name>
    <name type="synonym">NRDB</name>
</gene>
<comment type="function">
    <text>Provides the precursors necessary for DNA synthesis. Catalyzes the biosynthesis of deoxyribonucleotides from the corresponding ribonucleotides.</text>
</comment>
<comment type="catalytic activity">
    <reaction evidence="2">
        <text>a 2'-deoxyribonucleoside 5'-diphosphate + [thioredoxin]-disulfide + H2O = a ribonucleoside 5'-diphosphate + [thioredoxin]-dithiol</text>
        <dbReference type="Rhea" id="RHEA:23252"/>
        <dbReference type="Rhea" id="RHEA-COMP:10698"/>
        <dbReference type="Rhea" id="RHEA-COMP:10700"/>
        <dbReference type="ChEBI" id="CHEBI:15377"/>
        <dbReference type="ChEBI" id="CHEBI:29950"/>
        <dbReference type="ChEBI" id="CHEBI:50058"/>
        <dbReference type="ChEBI" id="CHEBI:57930"/>
        <dbReference type="ChEBI" id="CHEBI:73316"/>
        <dbReference type="EC" id="1.17.4.1"/>
    </reaction>
</comment>
<comment type="cofactor">
    <cofactor evidence="1">
        <name>Fe cation</name>
        <dbReference type="ChEBI" id="CHEBI:24875"/>
    </cofactor>
    <text evidence="1">Binds 2 iron ions per subunit.</text>
</comment>
<comment type="subunit">
    <text>Heterodimer of a large and a small subunit.</text>
</comment>
<comment type="similarity">
    <text evidence="3">Belongs to the ribonucleoside diphosphate reductase small chain family.</text>
</comment>
<protein>
    <recommendedName>
        <fullName>Ribonucleoside-diphosphate reductase small chain</fullName>
        <ecNumber>1.17.4.1</ecNumber>
    </recommendedName>
    <alternativeName>
        <fullName>Ribonucleotide reductase R2 subunit</fullName>
    </alternativeName>
    <alternativeName>
        <fullName>Ribonucleotide reductase small subunit</fullName>
    </alternativeName>
</protein>
<feature type="chain" id="PRO_0000190460" description="Ribonucleoside-diphosphate reductase small chain">
    <location>
        <begin position="1"/>
        <end position="337"/>
    </location>
</feature>
<feature type="active site" evidence="2">
    <location>
        <position position="123"/>
    </location>
</feature>
<feature type="binding site" evidence="2">
    <location>
        <position position="85"/>
    </location>
    <ligand>
        <name>Fe cation</name>
        <dbReference type="ChEBI" id="CHEBI:24875"/>
        <label>1</label>
    </ligand>
</feature>
<feature type="binding site" evidence="2">
    <location>
        <position position="116"/>
    </location>
    <ligand>
        <name>Fe cation</name>
        <dbReference type="ChEBI" id="CHEBI:24875"/>
        <label>1</label>
    </ligand>
</feature>
<feature type="binding site" evidence="1">
    <location>
        <position position="116"/>
    </location>
    <ligand>
        <name>Fe cation</name>
        <dbReference type="ChEBI" id="CHEBI:24875"/>
        <label>2</label>
    </ligand>
</feature>
<feature type="binding site" evidence="2">
    <location>
        <position position="119"/>
    </location>
    <ligand>
        <name>Fe cation</name>
        <dbReference type="ChEBI" id="CHEBI:24875"/>
        <label>1</label>
    </ligand>
</feature>
<feature type="binding site" evidence="1">
    <location>
        <position position="178"/>
    </location>
    <ligand>
        <name>Fe cation</name>
        <dbReference type="ChEBI" id="CHEBI:24875"/>
        <label>2</label>
    </ligand>
</feature>
<feature type="binding site" evidence="1">
    <location>
        <position position="212"/>
    </location>
    <ligand>
        <name>Fe cation</name>
        <dbReference type="ChEBI" id="CHEBI:24875"/>
        <label>2</label>
    </ligand>
</feature>
<feature type="binding site" evidence="1">
    <location>
        <position position="215"/>
    </location>
    <ligand>
        <name>Fe cation</name>
        <dbReference type="ChEBI" id="CHEBI:24875"/>
        <label>2</label>
    </ligand>
</feature>
<feature type="sequence conflict" description="In Ref. 2; CAA71741." evidence="3" ref="2">
    <original>CSR</original>
    <variation>RSA</variation>
    <location>
        <begin position="8"/>
        <end position="10"/>
    </location>
</feature>
<feature type="sequence conflict" description="In Ref. 2; CAA71741." evidence="3" ref="2">
    <original>E</original>
    <variation>K</variation>
    <location>
        <position position="43"/>
    </location>
</feature>
<organism>
    <name type="scientific">Trypanosoma brucei brucei</name>
    <dbReference type="NCBI Taxonomy" id="5702"/>
    <lineage>
        <taxon>Eukaryota</taxon>
        <taxon>Discoba</taxon>
        <taxon>Euglenozoa</taxon>
        <taxon>Kinetoplastea</taxon>
        <taxon>Metakinetoplastina</taxon>
        <taxon>Trypanosomatida</taxon>
        <taxon>Trypanosomatidae</taxon>
        <taxon>Trypanosoma</taxon>
    </lineage>
</organism>
<proteinExistence type="evidence at transcript level"/>
<accession>O15910</accession>
<accession>O15880</accession>
<dbReference type="EC" id="1.17.4.1"/>
<dbReference type="EMBL" id="U80911">
    <property type="protein sequence ID" value="AAB70705.1"/>
    <property type="molecule type" value="mRNA"/>
</dbReference>
<dbReference type="EMBL" id="Y10768">
    <property type="protein sequence ID" value="CAA71741.1"/>
    <property type="molecule type" value="Genomic_DNA"/>
</dbReference>
<dbReference type="SMR" id="O15910"/>
<dbReference type="GO" id="GO:0046872">
    <property type="term" value="F:metal ion binding"/>
    <property type="evidence" value="ECO:0007669"/>
    <property type="project" value="UniProtKB-KW"/>
</dbReference>
<dbReference type="GO" id="GO:0004748">
    <property type="term" value="F:ribonucleoside-diphosphate reductase activity, thioredoxin disulfide as acceptor"/>
    <property type="evidence" value="ECO:0007669"/>
    <property type="project" value="UniProtKB-EC"/>
</dbReference>
<dbReference type="GO" id="GO:0009263">
    <property type="term" value="P:deoxyribonucleotide biosynthetic process"/>
    <property type="evidence" value="ECO:0007669"/>
    <property type="project" value="UniProtKB-KW"/>
</dbReference>
<dbReference type="CDD" id="cd01049">
    <property type="entry name" value="RNRR2"/>
    <property type="match status" value="1"/>
</dbReference>
<dbReference type="FunFam" id="1.10.620.20:FF:000018">
    <property type="entry name" value="Ribonucleoside-diphosphate reductase small chain"/>
    <property type="match status" value="1"/>
</dbReference>
<dbReference type="Gene3D" id="1.10.620.20">
    <property type="entry name" value="Ribonucleotide Reductase, subunit A"/>
    <property type="match status" value="1"/>
</dbReference>
<dbReference type="InterPro" id="IPR009078">
    <property type="entry name" value="Ferritin-like_SF"/>
</dbReference>
<dbReference type="InterPro" id="IPR012348">
    <property type="entry name" value="RNR-like"/>
</dbReference>
<dbReference type="InterPro" id="IPR033909">
    <property type="entry name" value="RNR_small"/>
</dbReference>
<dbReference type="InterPro" id="IPR030475">
    <property type="entry name" value="RNR_small_AS"/>
</dbReference>
<dbReference type="InterPro" id="IPR000358">
    <property type="entry name" value="RNR_small_fam"/>
</dbReference>
<dbReference type="PANTHER" id="PTHR23409">
    <property type="entry name" value="RIBONUCLEOSIDE-DIPHOSPHATE REDUCTASE SMALL CHAIN"/>
    <property type="match status" value="1"/>
</dbReference>
<dbReference type="PANTHER" id="PTHR23409:SF18">
    <property type="entry name" value="RIBONUCLEOSIDE-DIPHOSPHATE REDUCTASE SUBUNIT M2"/>
    <property type="match status" value="1"/>
</dbReference>
<dbReference type="Pfam" id="PF00268">
    <property type="entry name" value="Ribonuc_red_sm"/>
    <property type="match status" value="1"/>
</dbReference>
<dbReference type="SUPFAM" id="SSF47240">
    <property type="entry name" value="Ferritin-like"/>
    <property type="match status" value="1"/>
</dbReference>
<dbReference type="PROSITE" id="PS00368">
    <property type="entry name" value="RIBORED_SMALL"/>
    <property type="match status" value="1"/>
</dbReference>
<reference key="1">
    <citation type="journal article" date="1997" name="Proc. Natl. Acad. Sci. U.S.A.">
        <title>Cloning and characterization of the R1 and R2 subunits of ribonucleotide reductase from Trypanosoma brucei.</title>
        <authorList>
            <person name="Hofer A."/>
            <person name="Schmidt P.P."/>
            <person name="Graslund A."/>
            <person name="Thelander L."/>
        </authorList>
    </citation>
    <scope>NUCLEOTIDE SEQUENCE [MRNA]</scope>
    <source>
        <strain>427</strain>
    </source>
</reference>
<reference key="2">
    <citation type="journal article" date="1997" name="FEBS Lett.">
        <title>Cloning, sequencing and expression of ribonucleotide reductase R2 from Trypanosoma brucei.</title>
        <authorList>
            <person name="Dormeyer M."/>
            <person name="Schoneck R."/>
            <person name="Dittmar G.A.G."/>
            <person name="Krauth-Siegel R.L."/>
        </authorList>
    </citation>
    <scope>NUCLEOTIDE SEQUENCE [GENOMIC DNA]</scope>
</reference>